<keyword id="KW-0067">ATP-binding</keyword>
<keyword id="KW-0150">Chloroplast</keyword>
<keyword id="KW-0217">Developmental protein</keyword>
<keyword id="KW-0378">Hydrolase</keyword>
<keyword id="KW-0472">Membrane</keyword>
<keyword id="KW-0479">Metal-binding</keyword>
<keyword id="KW-0482">Metalloprotease</keyword>
<keyword id="KW-0547">Nucleotide-binding</keyword>
<keyword id="KW-0934">Plastid</keyword>
<keyword id="KW-0645">Protease</keyword>
<keyword id="KW-1185">Reference proteome</keyword>
<keyword id="KW-0793">Thylakoid</keyword>
<keyword id="KW-0809">Transit peptide</keyword>
<keyword id="KW-0812">Transmembrane</keyword>
<keyword id="KW-1133">Transmembrane helix</keyword>
<keyword id="KW-0862">Zinc</keyword>
<comment type="function">
    <text>Part of a complex that function as an ATP-dependent zinc metallopeptidase. Involved in the thylakoid formation and in the removal of damaged D1 in the photosystem II, preventing cell death under high-intensity light conditions.</text>
</comment>
<comment type="cofactor">
    <cofactor evidence="1">
        <name>Zn(2+)</name>
        <dbReference type="ChEBI" id="CHEBI:29105"/>
    </cofactor>
    <text evidence="1">Binds 1 zinc ion per subunit.</text>
</comment>
<comment type="subunit">
    <text evidence="4 6">Heterohexamers with FTSH1, FTSH2 and FTSH5. May also form homooligomers.</text>
</comment>
<comment type="subcellular location">
    <subcellularLocation>
        <location evidence="3 7">Plastid</location>
        <location evidence="3 7">Chloroplast thylakoid membrane</location>
        <topology evidence="3">Single-pass membrane protein</topology>
        <orientation evidence="3">Stromal side</orientation>
    </subcellularLocation>
</comment>
<comment type="tissue specificity">
    <text evidence="4">Expressed in cotyledons, cauline and rosette leaves, stems, sepals, flovers and siliques. Very low in roots.</text>
</comment>
<comment type="induction">
    <text evidence="5">By heat and high light.</text>
</comment>
<comment type="domain">
    <text>The conserved lumenal (CL) domain (74-154) is present only in some FtsH homologs from organisms performing oxygenic photosynthesis.</text>
</comment>
<comment type="disruption phenotype">
    <text evidence="3">No visible changes in phenotype, probably due to a complementation by FTSH2. The presence of both FTSH1 or FTSH5 (subunit type A) and FTSH2 or FTSH8 (subunit type B) is essential for an active complex formation.</text>
</comment>
<comment type="similarity">
    <text evidence="8">In the N-terminal section; belongs to the AAA ATPase family.</text>
</comment>
<comment type="similarity">
    <text evidence="8">In the C-terminal section; belongs to the peptidase M41 family.</text>
</comment>
<gene>
    <name type="primary">FTSH8</name>
    <name type="ordered locus">At1g06430</name>
    <name type="ORF">F12K11.22</name>
    <name type="ORF">F12K11_24</name>
</gene>
<protein>
    <recommendedName>
        <fullName>ATP-dependent zinc metalloprotease FTSH 8, chloroplastic</fullName>
        <shortName>AtFTSH8</shortName>
        <ecNumber>3.4.24.-</ecNumber>
    </recommendedName>
</protein>
<proteinExistence type="evidence at protein level"/>
<accession>Q8W585</accession>
<accession>Q94AL5</accession>
<accession>Q9SHI8</accession>
<name>FTSH8_ARATH</name>
<sequence>MAASSACLLGNGLSVYTTKQRFQKLGLDRTSKVTVVKASLDEKKHEGRRGFFKLLLGNAAAGVGLLASGNANADEQGQGVSSSRMSYSRFLEYLDKGRVEKVDLYENGTIAIVEAVSPELGNRIQRVRVQLPGLSQELLQKLRAKNIDFAAHNAQEDQGSPILNLIGNLAFPVILIGGLFLLSRRSSGGMGGPGGPGFPLQIGQSKAKFQMEPNTGVTFDDVAGVDEAKQDFMEVVEFLKKPERFTAVGARIPKGVLLVGPPGTGKTLLAKAIAGEAGVPFFSISGSEFVEMFVGVGASRVRDLFKKAKENAPCIVFVDEIDAVGRQRGTGIGGGNDEREQTLNQLLTEMDGFEGNTGVIVVAATNRADILDSALLRPGRFDRQVSVDVPDVKGRTDILKVHSGNKKFESGVSLEVIAMRTPGFSGADLANLLNEAAILAGRRGKTAISSKEIDDSIDRIVAGMEGTVMTDGKSKSLVAYHEVGHAICGTLTPGHDAVQKVTLIPRGQARGLTWFIPSDDPTLISKQQLFARIVGGLGGRAAEEVIFGESEVTTGAVSDLQQITGLAKQMVTTFGMSEIGPWSLMDSSEQSDVIMRMMARNSMSEKLANDIDTAVKTLSDKAYEIALSQIRNNREAMDKIVEILLEKETMSGDEFRAILSEFTEIPPENRVASSTSTSTPTPASV</sequence>
<organism>
    <name type="scientific">Arabidopsis thaliana</name>
    <name type="common">Mouse-ear cress</name>
    <dbReference type="NCBI Taxonomy" id="3702"/>
    <lineage>
        <taxon>Eukaryota</taxon>
        <taxon>Viridiplantae</taxon>
        <taxon>Streptophyta</taxon>
        <taxon>Embryophyta</taxon>
        <taxon>Tracheophyta</taxon>
        <taxon>Spermatophyta</taxon>
        <taxon>Magnoliopsida</taxon>
        <taxon>eudicotyledons</taxon>
        <taxon>Gunneridae</taxon>
        <taxon>Pentapetalae</taxon>
        <taxon>rosids</taxon>
        <taxon>malvids</taxon>
        <taxon>Brassicales</taxon>
        <taxon>Brassicaceae</taxon>
        <taxon>Camelineae</taxon>
        <taxon>Arabidopsis</taxon>
    </lineage>
</organism>
<dbReference type="EC" id="3.4.24.-"/>
<dbReference type="EMBL" id="AC007592">
    <property type="protein sequence ID" value="AAF24819.1"/>
    <property type="molecule type" value="Genomic_DNA"/>
</dbReference>
<dbReference type="EMBL" id="CP002684">
    <property type="protein sequence ID" value="AEE27986.1"/>
    <property type="molecule type" value="Genomic_DNA"/>
</dbReference>
<dbReference type="EMBL" id="CP002684">
    <property type="protein sequence ID" value="ANM59212.1"/>
    <property type="molecule type" value="Genomic_DNA"/>
</dbReference>
<dbReference type="EMBL" id="CP002684">
    <property type="protein sequence ID" value="ANM59213.1"/>
    <property type="molecule type" value="Genomic_DNA"/>
</dbReference>
<dbReference type="EMBL" id="AF419565">
    <property type="protein sequence ID" value="AAL31897.1"/>
    <property type="molecule type" value="mRNA"/>
</dbReference>
<dbReference type="EMBL" id="BT002649">
    <property type="protein sequence ID" value="AAO11565.1"/>
    <property type="molecule type" value="mRNA"/>
</dbReference>
<dbReference type="EMBL" id="BT003813">
    <property type="protein sequence ID" value="AAO41866.1"/>
    <property type="molecule type" value="mRNA"/>
</dbReference>
<dbReference type="EMBL" id="AY045951">
    <property type="protein sequence ID" value="AAK76625.2"/>
    <property type="molecule type" value="mRNA"/>
</dbReference>
<dbReference type="RefSeq" id="NP_001321589.1">
    <property type="nucleotide sequence ID" value="NM_001331629.1"/>
</dbReference>
<dbReference type="RefSeq" id="NP_001321590.1">
    <property type="nucleotide sequence ID" value="NM_001331628.1"/>
</dbReference>
<dbReference type="RefSeq" id="NP_563766.3">
    <property type="nucleotide sequence ID" value="NM_100523.6"/>
</dbReference>
<dbReference type="SMR" id="Q8W585"/>
<dbReference type="BioGRID" id="22395">
    <property type="interactions" value="2"/>
</dbReference>
<dbReference type="FunCoup" id="Q8W585">
    <property type="interactions" value="169"/>
</dbReference>
<dbReference type="STRING" id="3702.Q8W585"/>
<dbReference type="MEROPS" id="M41.025"/>
<dbReference type="GlyGen" id="Q8W585">
    <property type="glycosylation" value="1 site"/>
</dbReference>
<dbReference type="iPTMnet" id="Q8W585"/>
<dbReference type="PaxDb" id="3702-AT1G06430.1"/>
<dbReference type="ProteomicsDB" id="228887"/>
<dbReference type="EnsemblPlants" id="AT1G06430.1">
    <property type="protein sequence ID" value="AT1G06430.1"/>
    <property type="gene ID" value="AT1G06430"/>
</dbReference>
<dbReference type="EnsemblPlants" id="AT1G06430.2">
    <property type="protein sequence ID" value="AT1G06430.2"/>
    <property type="gene ID" value="AT1G06430"/>
</dbReference>
<dbReference type="EnsemblPlants" id="AT1G06430.3">
    <property type="protein sequence ID" value="AT1G06430.3"/>
    <property type="gene ID" value="AT1G06430"/>
</dbReference>
<dbReference type="GeneID" id="837154"/>
<dbReference type="Gramene" id="AT1G06430.1">
    <property type="protein sequence ID" value="AT1G06430.1"/>
    <property type="gene ID" value="AT1G06430"/>
</dbReference>
<dbReference type="Gramene" id="AT1G06430.2">
    <property type="protein sequence ID" value="AT1G06430.2"/>
    <property type="gene ID" value="AT1G06430"/>
</dbReference>
<dbReference type="Gramene" id="AT1G06430.3">
    <property type="protein sequence ID" value="AT1G06430.3"/>
    <property type="gene ID" value="AT1G06430"/>
</dbReference>
<dbReference type="KEGG" id="ath:AT1G06430"/>
<dbReference type="Araport" id="AT1G06430"/>
<dbReference type="TAIR" id="AT1G06430">
    <property type="gene designation" value="FTSH8"/>
</dbReference>
<dbReference type="eggNOG" id="KOG0731">
    <property type="taxonomic scope" value="Eukaryota"/>
</dbReference>
<dbReference type="HOGENOM" id="CLU_000688_16_2_1"/>
<dbReference type="InParanoid" id="Q8W585"/>
<dbReference type="OMA" id="RIDCINL"/>
<dbReference type="OrthoDB" id="1413014at2759"/>
<dbReference type="PhylomeDB" id="Q8W585"/>
<dbReference type="BRENDA" id="3.4.24.B20">
    <property type="organism ID" value="399"/>
</dbReference>
<dbReference type="PRO" id="PR:Q8W585"/>
<dbReference type="Proteomes" id="UP000006548">
    <property type="component" value="Chromosome 1"/>
</dbReference>
<dbReference type="ExpressionAtlas" id="Q8W585">
    <property type="expression patterns" value="baseline and differential"/>
</dbReference>
<dbReference type="GO" id="GO:0009507">
    <property type="term" value="C:chloroplast"/>
    <property type="evidence" value="ECO:0000314"/>
    <property type="project" value="TAIR"/>
</dbReference>
<dbReference type="GO" id="GO:0009941">
    <property type="term" value="C:chloroplast envelope"/>
    <property type="evidence" value="ECO:0007005"/>
    <property type="project" value="TAIR"/>
</dbReference>
<dbReference type="GO" id="GO:0009534">
    <property type="term" value="C:chloroplast thylakoid"/>
    <property type="evidence" value="ECO:0007005"/>
    <property type="project" value="TAIR"/>
</dbReference>
<dbReference type="GO" id="GO:0009535">
    <property type="term" value="C:chloroplast thylakoid membrane"/>
    <property type="evidence" value="ECO:0007005"/>
    <property type="project" value="TAIR"/>
</dbReference>
<dbReference type="GO" id="GO:0005576">
    <property type="term" value="C:extracellular region"/>
    <property type="evidence" value="ECO:0007005"/>
    <property type="project" value="TAIR"/>
</dbReference>
<dbReference type="GO" id="GO:0009579">
    <property type="term" value="C:thylakoid"/>
    <property type="evidence" value="ECO:0007005"/>
    <property type="project" value="TAIR"/>
</dbReference>
<dbReference type="GO" id="GO:0005524">
    <property type="term" value="F:ATP binding"/>
    <property type="evidence" value="ECO:0007669"/>
    <property type="project" value="UniProtKB-KW"/>
</dbReference>
<dbReference type="GO" id="GO:0016887">
    <property type="term" value="F:ATP hydrolysis activity"/>
    <property type="evidence" value="ECO:0007669"/>
    <property type="project" value="InterPro"/>
</dbReference>
<dbReference type="GO" id="GO:0004176">
    <property type="term" value="F:ATP-dependent peptidase activity"/>
    <property type="evidence" value="ECO:0000250"/>
    <property type="project" value="TAIR"/>
</dbReference>
<dbReference type="GO" id="GO:0004222">
    <property type="term" value="F:metalloendopeptidase activity"/>
    <property type="evidence" value="ECO:0007669"/>
    <property type="project" value="InterPro"/>
</dbReference>
<dbReference type="GO" id="GO:0008270">
    <property type="term" value="F:zinc ion binding"/>
    <property type="evidence" value="ECO:0007669"/>
    <property type="project" value="InterPro"/>
</dbReference>
<dbReference type="GO" id="GO:0006508">
    <property type="term" value="P:proteolysis"/>
    <property type="evidence" value="ECO:0007669"/>
    <property type="project" value="UniProtKB-KW"/>
</dbReference>
<dbReference type="GO" id="GO:0010304">
    <property type="term" value="P:PSII associated light-harvesting complex II catabolic process"/>
    <property type="evidence" value="ECO:0000304"/>
    <property type="project" value="TAIR"/>
</dbReference>
<dbReference type="CDD" id="cd19501">
    <property type="entry name" value="RecA-like_FtsH"/>
    <property type="match status" value="1"/>
</dbReference>
<dbReference type="FunFam" id="1.10.8.60:FF:000001">
    <property type="entry name" value="ATP-dependent zinc metalloprotease FtsH"/>
    <property type="match status" value="1"/>
</dbReference>
<dbReference type="FunFam" id="1.20.58.760:FF:000001">
    <property type="entry name" value="ATP-dependent zinc metalloprotease FtsH"/>
    <property type="match status" value="1"/>
</dbReference>
<dbReference type="FunFam" id="3.40.50.300:FF:000001">
    <property type="entry name" value="ATP-dependent zinc metalloprotease FtsH"/>
    <property type="match status" value="1"/>
</dbReference>
<dbReference type="FunFam" id="3.30.720.210:FF:000002">
    <property type="entry name" value="ATP-dependent zinc metalloprotease FTSH chloroplastic"/>
    <property type="match status" value="1"/>
</dbReference>
<dbReference type="Gene3D" id="1.10.8.60">
    <property type="match status" value="1"/>
</dbReference>
<dbReference type="Gene3D" id="3.30.720.210">
    <property type="match status" value="1"/>
</dbReference>
<dbReference type="Gene3D" id="3.40.50.300">
    <property type="entry name" value="P-loop containing nucleotide triphosphate hydrolases"/>
    <property type="match status" value="1"/>
</dbReference>
<dbReference type="Gene3D" id="1.20.58.760">
    <property type="entry name" value="Peptidase M41"/>
    <property type="match status" value="1"/>
</dbReference>
<dbReference type="HAMAP" id="MF_01458">
    <property type="entry name" value="FtsH"/>
    <property type="match status" value="1"/>
</dbReference>
<dbReference type="InterPro" id="IPR003593">
    <property type="entry name" value="AAA+_ATPase"/>
</dbReference>
<dbReference type="InterPro" id="IPR041569">
    <property type="entry name" value="AAA_lid_3"/>
</dbReference>
<dbReference type="InterPro" id="IPR003959">
    <property type="entry name" value="ATPase_AAA_core"/>
</dbReference>
<dbReference type="InterPro" id="IPR003960">
    <property type="entry name" value="ATPase_AAA_CS"/>
</dbReference>
<dbReference type="InterPro" id="IPR005936">
    <property type="entry name" value="FtsH"/>
</dbReference>
<dbReference type="InterPro" id="IPR027417">
    <property type="entry name" value="P-loop_NTPase"/>
</dbReference>
<dbReference type="InterPro" id="IPR011546">
    <property type="entry name" value="Pept_M41_FtsH_extracell"/>
</dbReference>
<dbReference type="InterPro" id="IPR000642">
    <property type="entry name" value="Peptidase_M41"/>
</dbReference>
<dbReference type="InterPro" id="IPR037219">
    <property type="entry name" value="Peptidase_M41-like"/>
</dbReference>
<dbReference type="NCBIfam" id="TIGR01241">
    <property type="entry name" value="FtsH_fam"/>
    <property type="match status" value="1"/>
</dbReference>
<dbReference type="PANTHER" id="PTHR23076:SF131">
    <property type="entry name" value="ATP-DEPENDENT ZINC METALLOPROTEASE FTSH 8, CHLOROPLASTIC"/>
    <property type="match status" value="1"/>
</dbReference>
<dbReference type="PANTHER" id="PTHR23076">
    <property type="entry name" value="METALLOPROTEASE M41 FTSH"/>
    <property type="match status" value="1"/>
</dbReference>
<dbReference type="Pfam" id="PF00004">
    <property type="entry name" value="AAA"/>
    <property type="match status" value="1"/>
</dbReference>
<dbReference type="Pfam" id="PF17862">
    <property type="entry name" value="AAA_lid_3"/>
    <property type="match status" value="1"/>
</dbReference>
<dbReference type="Pfam" id="PF06480">
    <property type="entry name" value="FtsH_ext"/>
    <property type="match status" value="1"/>
</dbReference>
<dbReference type="Pfam" id="PF01434">
    <property type="entry name" value="Peptidase_M41"/>
    <property type="match status" value="1"/>
</dbReference>
<dbReference type="SMART" id="SM00382">
    <property type="entry name" value="AAA"/>
    <property type="match status" value="1"/>
</dbReference>
<dbReference type="SUPFAM" id="SSF140990">
    <property type="entry name" value="FtsH protease domain-like"/>
    <property type="match status" value="1"/>
</dbReference>
<dbReference type="SUPFAM" id="SSF52540">
    <property type="entry name" value="P-loop containing nucleoside triphosphate hydrolases"/>
    <property type="match status" value="1"/>
</dbReference>
<dbReference type="PROSITE" id="PS00674">
    <property type="entry name" value="AAA"/>
    <property type="match status" value="1"/>
</dbReference>
<reference key="1">
    <citation type="journal article" date="2000" name="Nature">
        <title>Sequence and analysis of chromosome 1 of the plant Arabidopsis thaliana.</title>
        <authorList>
            <person name="Theologis A."/>
            <person name="Ecker J.R."/>
            <person name="Palm C.J."/>
            <person name="Federspiel N.A."/>
            <person name="Kaul S."/>
            <person name="White O."/>
            <person name="Alonso J."/>
            <person name="Altafi H."/>
            <person name="Araujo R."/>
            <person name="Bowman C.L."/>
            <person name="Brooks S.Y."/>
            <person name="Buehler E."/>
            <person name="Chan A."/>
            <person name="Chao Q."/>
            <person name="Chen H."/>
            <person name="Cheuk R.F."/>
            <person name="Chin C.W."/>
            <person name="Chung M.K."/>
            <person name="Conn L."/>
            <person name="Conway A.B."/>
            <person name="Conway A.R."/>
            <person name="Creasy T.H."/>
            <person name="Dewar K."/>
            <person name="Dunn P."/>
            <person name="Etgu P."/>
            <person name="Feldblyum T.V."/>
            <person name="Feng J.-D."/>
            <person name="Fong B."/>
            <person name="Fujii C.Y."/>
            <person name="Gill J.E."/>
            <person name="Goldsmith A.D."/>
            <person name="Haas B."/>
            <person name="Hansen N.F."/>
            <person name="Hughes B."/>
            <person name="Huizar L."/>
            <person name="Hunter J.L."/>
            <person name="Jenkins J."/>
            <person name="Johnson-Hopson C."/>
            <person name="Khan S."/>
            <person name="Khaykin E."/>
            <person name="Kim C.J."/>
            <person name="Koo H.L."/>
            <person name="Kremenetskaia I."/>
            <person name="Kurtz D.B."/>
            <person name="Kwan A."/>
            <person name="Lam B."/>
            <person name="Langin-Hooper S."/>
            <person name="Lee A."/>
            <person name="Lee J.M."/>
            <person name="Lenz C.A."/>
            <person name="Li J.H."/>
            <person name="Li Y.-P."/>
            <person name="Lin X."/>
            <person name="Liu S.X."/>
            <person name="Liu Z.A."/>
            <person name="Luros J.S."/>
            <person name="Maiti R."/>
            <person name="Marziali A."/>
            <person name="Militscher J."/>
            <person name="Miranda M."/>
            <person name="Nguyen M."/>
            <person name="Nierman W.C."/>
            <person name="Osborne B.I."/>
            <person name="Pai G."/>
            <person name="Peterson J."/>
            <person name="Pham P.K."/>
            <person name="Rizzo M."/>
            <person name="Rooney T."/>
            <person name="Rowley D."/>
            <person name="Sakano H."/>
            <person name="Salzberg S.L."/>
            <person name="Schwartz J.R."/>
            <person name="Shinn P."/>
            <person name="Southwick A.M."/>
            <person name="Sun H."/>
            <person name="Tallon L.J."/>
            <person name="Tambunga G."/>
            <person name="Toriumi M.J."/>
            <person name="Town C.D."/>
            <person name="Utterback T."/>
            <person name="Van Aken S."/>
            <person name="Vaysberg M."/>
            <person name="Vysotskaia V.S."/>
            <person name="Walker M."/>
            <person name="Wu D."/>
            <person name="Yu G."/>
            <person name="Fraser C.M."/>
            <person name="Venter J.C."/>
            <person name="Davis R.W."/>
        </authorList>
    </citation>
    <scope>NUCLEOTIDE SEQUENCE [LARGE SCALE GENOMIC DNA]</scope>
    <source>
        <strain>cv. Columbia</strain>
    </source>
</reference>
<reference key="2">
    <citation type="journal article" date="2017" name="Plant J.">
        <title>Araport11: a complete reannotation of the Arabidopsis thaliana reference genome.</title>
        <authorList>
            <person name="Cheng C.Y."/>
            <person name="Krishnakumar V."/>
            <person name="Chan A.P."/>
            <person name="Thibaud-Nissen F."/>
            <person name="Schobel S."/>
            <person name="Town C.D."/>
        </authorList>
    </citation>
    <scope>GENOME REANNOTATION</scope>
    <source>
        <strain>cv. Columbia</strain>
    </source>
</reference>
<reference key="3">
    <citation type="journal article" date="2003" name="Science">
        <title>Empirical analysis of transcriptional activity in the Arabidopsis genome.</title>
        <authorList>
            <person name="Yamada K."/>
            <person name="Lim J."/>
            <person name="Dale J.M."/>
            <person name="Chen H."/>
            <person name="Shinn P."/>
            <person name="Palm C.J."/>
            <person name="Southwick A.M."/>
            <person name="Wu H.C."/>
            <person name="Kim C.J."/>
            <person name="Nguyen M."/>
            <person name="Pham P.K."/>
            <person name="Cheuk R.F."/>
            <person name="Karlin-Newmann G."/>
            <person name="Liu S.X."/>
            <person name="Lam B."/>
            <person name="Sakano H."/>
            <person name="Wu T."/>
            <person name="Yu G."/>
            <person name="Miranda M."/>
            <person name="Quach H.L."/>
            <person name="Tripp M."/>
            <person name="Chang C.H."/>
            <person name="Lee J.M."/>
            <person name="Toriumi M.J."/>
            <person name="Chan M.M."/>
            <person name="Tang C.C."/>
            <person name="Onodera C.S."/>
            <person name="Deng J.M."/>
            <person name="Akiyama K."/>
            <person name="Ansari Y."/>
            <person name="Arakawa T."/>
            <person name="Banh J."/>
            <person name="Banno F."/>
            <person name="Bowser L."/>
            <person name="Brooks S.Y."/>
            <person name="Carninci P."/>
            <person name="Chao Q."/>
            <person name="Choy N."/>
            <person name="Enju A."/>
            <person name="Goldsmith A.D."/>
            <person name="Gurjal M."/>
            <person name="Hansen N.F."/>
            <person name="Hayashizaki Y."/>
            <person name="Johnson-Hopson C."/>
            <person name="Hsuan V.W."/>
            <person name="Iida K."/>
            <person name="Karnes M."/>
            <person name="Khan S."/>
            <person name="Koesema E."/>
            <person name="Ishida J."/>
            <person name="Jiang P.X."/>
            <person name="Jones T."/>
            <person name="Kawai J."/>
            <person name="Kamiya A."/>
            <person name="Meyers C."/>
            <person name="Nakajima M."/>
            <person name="Narusaka M."/>
            <person name="Seki M."/>
            <person name="Sakurai T."/>
            <person name="Satou M."/>
            <person name="Tamse R."/>
            <person name="Vaysberg M."/>
            <person name="Wallender E.K."/>
            <person name="Wong C."/>
            <person name="Yamamura Y."/>
            <person name="Yuan S."/>
            <person name="Shinozaki K."/>
            <person name="Davis R.W."/>
            <person name="Theologis A."/>
            <person name="Ecker J.R."/>
        </authorList>
    </citation>
    <scope>NUCLEOTIDE SEQUENCE [LARGE SCALE MRNA]</scope>
    <source>
        <strain>cv. Columbia</strain>
    </source>
</reference>
<reference key="4">
    <citation type="journal article" date="2001" name="Plant Physiol.">
        <title>Chloroplast and mitochondrial proteases in Arabidopsis. A proposed nomenclature.</title>
        <authorList>
            <person name="Adam Z."/>
            <person name="Adamska I."/>
            <person name="Nakabayashi K."/>
            <person name="Ostersetzer O."/>
            <person name="Haussuhl K."/>
            <person name="Manuell A."/>
            <person name="Zheng B."/>
            <person name="Vallon O."/>
            <person name="Rodermel S.R."/>
            <person name="Shinozaki K."/>
            <person name="Clarke A.K."/>
        </authorList>
    </citation>
    <scope>GENE FAMILY</scope>
    <scope>NOMENCLATURE</scope>
</reference>
<reference key="5">
    <citation type="journal article" date="2002" name="J. Biol. Chem.">
        <title>A critical role for the Var2 FtsH homologue of Arabidopsis thaliana in the photosystem II repair cycle in vivo.</title>
        <authorList>
            <person name="Bailey S."/>
            <person name="Thompson E."/>
            <person name="Nixon P.J."/>
            <person name="Horton P."/>
            <person name="Mullineaux C.W."/>
            <person name="Robinson C."/>
            <person name="Mann N.H."/>
        </authorList>
    </citation>
    <scope>CONSERVED LUMENAL DOMAIN</scope>
</reference>
<reference key="6">
    <citation type="journal article" date="2003" name="Plant Cell">
        <title>Coordinated regulation and complex formation of yellow variegated1 and yellow variegated2, chloroplastic FtsH metalloproteases involved in the repair cycle of photosystem II in Arabidopsis thylakoid membranes.</title>
        <authorList>
            <person name="Sakamoto W."/>
            <person name="Zaltsman A."/>
            <person name="Adam Z."/>
            <person name="Takahashi Y."/>
        </authorList>
    </citation>
    <scope>SUBCELLULAR LOCATION</scope>
    <scope>DISRUPTION PHENOTYPE</scope>
</reference>
<reference key="7">
    <citation type="journal article" date="2004" name="Plant Physiol.">
        <title>Expression in multigene families. Analysis of chloroplast and mitochondrial proteases.</title>
        <authorList>
            <person name="Sinvany-Villalobo G."/>
            <person name="Davydov O."/>
            <person name="Ben-Ari G."/>
            <person name="Zaltsman A."/>
            <person name="Raskind A."/>
            <person name="Adam Z."/>
        </authorList>
    </citation>
    <scope>INDUCTION BY HEAT AND HIGH LIGHT</scope>
</reference>
<reference key="8">
    <citation type="journal article" date="2004" name="Plant J.">
        <title>The Arabidopsis FtsH metalloprotease gene family: interchangeability of subunits in chloroplast oligomeric complexes.</title>
        <authorList>
            <person name="Yu F."/>
            <person name="Park S."/>
            <person name="Rodermel S.R."/>
        </authorList>
    </citation>
    <scope>SUBUNIT</scope>
    <scope>TISSUE SPECIFICITY</scope>
    <scope>GENE FAMILY</scope>
    <scope>NOMENCLATURE</scope>
</reference>
<reference key="9">
    <citation type="journal article" date="2005" name="Plant Cell">
        <title>Two types of FtsH protease subunits are required for chloroplast biogenesis and Photosystem II repair in Arabidopsis.</title>
        <authorList>
            <person name="Zaltsman A."/>
            <person name="Ori N."/>
            <person name="Adam Z."/>
        </authorList>
    </citation>
    <scope>SUBUNIT</scope>
</reference>
<reference key="10">
    <citation type="journal article" date="2008" name="PLoS ONE">
        <title>Sorting signals, N-terminal modifications and abundance of the chloroplast proteome.</title>
        <authorList>
            <person name="Zybailov B."/>
            <person name="Rutschow H."/>
            <person name="Friso G."/>
            <person name="Rudella A."/>
            <person name="Emanuelsson O."/>
            <person name="Sun Q."/>
            <person name="van Wijk K.J."/>
        </authorList>
    </citation>
    <scope>IDENTIFICATION BY MASS SPECTROMETRY</scope>
    <scope>SUBCELLULAR LOCATION [LARGE SCALE ANALYSIS]</scope>
</reference>
<evidence type="ECO:0000250" key="1"/>
<evidence type="ECO:0000255" key="2"/>
<evidence type="ECO:0000269" key="3">
    <source>
    </source>
</evidence>
<evidence type="ECO:0000269" key="4">
    <source>
    </source>
</evidence>
<evidence type="ECO:0000269" key="5">
    <source>
    </source>
</evidence>
<evidence type="ECO:0000269" key="6">
    <source>
    </source>
</evidence>
<evidence type="ECO:0000269" key="7">
    <source>
    </source>
</evidence>
<evidence type="ECO:0000305" key="8"/>
<feature type="transit peptide" description="Chloroplast" evidence="2">
    <location>
        <begin position="1"/>
        <end position="37"/>
    </location>
</feature>
<feature type="transit peptide" description="Thylakoid" evidence="8">
    <location>
        <begin position="38"/>
        <end position="73"/>
    </location>
</feature>
<feature type="chain" id="PRO_0000341333" description="ATP-dependent zinc metalloprotease FTSH 8, chloroplastic">
    <location>
        <begin position="74"/>
        <end position="685"/>
    </location>
</feature>
<feature type="topological domain" description="Lumenal, thylakoid" evidence="2">
    <location>
        <begin position="38"/>
        <end position="161"/>
    </location>
</feature>
<feature type="transmembrane region" description="Helical" evidence="2">
    <location>
        <begin position="162"/>
        <end position="182"/>
    </location>
</feature>
<feature type="topological domain" description="Stromal" evidence="2">
    <location>
        <begin position="183"/>
        <end position="685"/>
    </location>
</feature>
<feature type="active site" evidence="1">
    <location>
        <position position="482"/>
    </location>
</feature>
<feature type="binding site" evidence="2">
    <location>
        <begin position="260"/>
        <end position="267"/>
    </location>
    <ligand>
        <name>ATP</name>
        <dbReference type="ChEBI" id="CHEBI:30616"/>
    </ligand>
</feature>
<feature type="binding site" evidence="1">
    <location>
        <position position="481"/>
    </location>
    <ligand>
        <name>Zn(2+)</name>
        <dbReference type="ChEBI" id="CHEBI:29105"/>
        <note>catalytic</note>
    </ligand>
</feature>
<feature type="binding site" evidence="1">
    <location>
        <position position="485"/>
    </location>
    <ligand>
        <name>Zn(2+)</name>
        <dbReference type="ChEBI" id="CHEBI:29105"/>
        <note>catalytic</note>
    </ligand>
</feature>
<feature type="binding site" evidence="1">
    <location>
        <position position="559"/>
    </location>
    <ligand>
        <name>Zn(2+)</name>
        <dbReference type="ChEBI" id="CHEBI:29105"/>
        <note>catalytic</note>
    </ligand>
</feature>